<keyword id="KW-1185">Reference proteome</keyword>
<gene>
    <name type="ORF">C09G5.7</name>
</gene>
<evidence type="ECO:0000256" key="1">
    <source>
        <dbReference type="SAM" id="MobiDB-lite"/>
    </source>
</evidence>
<proteinExistence type="predicted"/>
<feature type="chain" id="PRO_0000065172" description="Uncharacterized protein C09F5.7">
    <location>
        <begin position="1"/>
        <end position="395"/>
    </location>
</feature>
<feature type="region of interest" description="Disordered" evidence="1">
    <location>
        <begin position="1"/>
        <end position="121"/>
    </location>
</feature>
<feature type="region of interest" description="Disordered" evidence="1">
    <location>
        <begin position="136"/>
        <end position="187"/>
    </location>
</feature>
<feature type="region of interest" description="Disordered" evidence="1">
    <location>
        <begin position="308"/>
        <end position="335"/>
    </location>
</feature>
<feature type="region of interest" description="Disordered" evidence="1">
    <location>
        <begin position="365"/>
        <end position="395"/>
    </location>
</feature>
<feature type="compositionally biased region" description="Basic and acidic residues" evidence="1">
    <location>
        <begin position="13"/>
        <end position="28"/>
    </location>
</feature>
<feature type="compositionally biased region" description="Basic residues" evidence="1">
    <location>
        <begin position="64"/>
        <end position="73"/>
    </location>
</feature>
<feature type="compositionally biased region" description="Basic and acidic residues" evidence="1">
    <location>
        <begin position="97"/>
        <end position="111"/>
    </location>
</feature>
<feature type="compositionally biased region" description="Polar residues" evidence="1">
    <location>
        <begin position="144"/>
        <end position="164"/>
    </location>
</feature>
<feature type="compositionally biased region" description="Basic residues" evidence="1">
    <location>
        <begin position="170"/>
        <end position="179"/>
    </location>
</feature>
<feature type="compositionally biased region" description="Basic residues" evidence="1">
    <location>
        <begin position="365"/>
        <end position="377"/>
    </location>
</feature>
<feature type="compositionally biased region" description="Basic and acidic residues" evidence="1">
    <location>
        <begin position="378"/>
        <end position="395"/>
    </location>
</feature>
<sequence length="395" mass="45310">MLLPQPKSTAKKPKGEAKSLVARERKSQPQDSALMEVPAKREMPKKEVKKIRSVHKVESVTKTKSAKLRRKKSYSLSSDNESKYKKSISPAASEEASIEKKKEEMTSKLPEKSVAMKTANSPKTFNMELAKKFFEMRMKESQRTSRMATKSDSSLETMPESSHNSGQSSKSRKSQRTRGKSTPLDRNIFKENGEPVWVVPDRKPGELVMNEHGEMVKYPELMAALEEDGLEMEDGKGWFQKMSSYLMGELDQGRIDNKAASKDINPFASMETLEERTDLYFSRETVIYNTTDSIFNLCHNAIERFSQQNNEDTIRKSVPPSREPGSKMMTVSKDEEEKTAIVTSIRFDARAYRISYDRRRPVHSIQKFRKKYQKQLKKSQEEKKDDTKTAKNEGD</sequence>
<name>YQ37_CAEEL</name>
<organism>
    <name type="scientific">Caenorhabditis elegans</name>
    <dbReference type="NCBI Taxonomy" id="6239"/>
    <lineage>
        <taxon>Eukaryota</taxon>
        <taxon>Metazoa</taxon>
        <taxon>Ecdysozoa</taxon>
        <taxon>Nematoda</taxon>
        <taxon>Chromadorea</taxon>
        <taxon>Rhabditida</taxon>
        <taxon>Rhabditina</taxon>
        <taxon>Rhabditomorpha</taxon>
        <taxon>Rhabditoidea</taxon>
        <taxon>Rhabditidae</taxon>
        <taxon>Peloderinae</taxon>
        <taxon>Caenorhabditis</taxon>
    </lineage>
</organism>
<dbReference type="EMBL" id="Z46791">
    <property type="protein sequence ID" value="CAA86759.1"/>
    <property type="molecule type" value="Genomic_DNA"/>
</dbReference>
<dbReference type="PIR" id="T19144">
    <property type="entry name" value="T19144"/>
</dbReference>
<dbReference type="RefSeq" id="NP_496312.1">
    <property type="nucleotide sequence ID" value="NM_063911.2"/>
</dbReference>
<dbReference type="SMR" id="Q09458"/>
<dbReference type="FunCoup" id="Q09458">
    <property type="interactions" value="5"/>
</dbReference>
<dbReference type="PaxDb" id="6239-C09G5.7"/>
<dbReference type="EnsemblMetazoa" id="C09G5.7.1">
    <property type="protein sequence ID" value="C09G5.7.1"/>
    <property type="gene ID" value="WBGene00007489"/>
</dbReference>
<dbReference type="GeneID" id="182461"/>
<dbReference type="KEGG" id="cel:CELE_C09G5.7"/>
<dbReference type="UCSC" id="C09G5.7">
    <property type="organism name" value="c. elegans"/>
</dbReference>
<dbReference type="AGR" id="WB:WBGene00007489"/>
<dbReference type="CTD" id="182461"/>
<dbReference type="WormBase" id="C09G5.7">
    <property type="protein sequence ID" value="CE01487"/>
    <property type="gene ID" value="WBGene00007489"/>
</dbReference>
<dbReference type="eggNOG" id="ENOG502TGGA">
    <property type="taxonomic scope" value="Eukaryota"/>
</dbReference>
<dbReference type="GeneTree" id="ENSGT00970000196006"/>
<dbReference type="HOGENOM" id="CLU_694913_0_0_1"/>
<dbReference type="InParanoid" id="Q09458"/>
<dbReference type="OMA" id="EDGKGWF"/>
<dbReference type="OrthoDB" id="5822380at2759"/>
<dbReference type="PhylomeDB" id="Q09458"/>
<dbReference type="PRO" id="PR:Q09458"/>
<dbReference type="Proteomes" id="UP000001940">
    <property type="component" value="Chromosome II"/>
</dbReference>
<dbReference type="Bgee" id="WBGene00007489">
    <property type="expression patterns" value="Expressed in adult organism and 2 other cell types or tissues"/>
</dbReference>
<dbReference type="PANTHER" id="PTHR37444:SF2">
    <property type="entry name" value="PROTEIN CBG20614"/>
    <property type="match status" value="1"/>
</dbReference>
<dbReference type="PANTHER" id="PTHR37444">
    <property type="entry name" value="PROTEIN CBG24900-RELATED"/>
    <property type="match status" value="1"/>
</dbReference>
<protein>
    <recommendedName>
        <fullName>Uncharacterized protein C09F5.7</fullName>
    </recommendedName>
</protein>
<reference key="1">
    <citation type="journal article" date="1998" name="Science">
        <title>Genome sequence of the nematode C. elegans: a platform for investigating biology.</title>
        <authorList>
            <consortium name="The C. elegans sequencing consortium"/>
        </authorList>
    </citation>
    <scope>NUCLEOTIDE SEQUENCE [LARGE SCALE GENOMIC DNA]</scope>
    <source>
        <strain>Bristol N2</strain>
    </source>
</reference>
<accession>Q09458</accession>